<accession>B2T7J6</accession>
<gene>
    <name evidence="1" type="primary">hemE</name>
    <name type="ordered locus">Bphyt_3890</name>
</gene>
<sequence>MAHKLLNDTFLRALLRQPTDYTPIWLMRQAGRYLPEYNATRGRAGSFLGLAKSPAYATEVTLQPLDRYPLDAAILFSDILTVPDAMGLGLEFVTGEGPKFVRPVRTEDDVARLAVPDIDATLRYVTDAVREIRTALTDAQGRQRVPLIGFSGSPWTLACYMVEGGGSADFRTVKSMLYARPDLMHRILDVNARSVAAYLNAQIEAGAQAVMIFDTWGGALADGVYQRFSLQYIQQVVSQLKRDHGGEKVPVITFTKGGGLWLDEIAETGVDAVGLDWTVNLSKARERVGGKVALQGNIDPSVLFAPPASIRMEARAVLDSFGNHPGHVFNLGHGISQFTPPENVAELVDEVHRHSRAIRSGAHAPA</sequence>
<organism>
    <name type="scientific">Paraburkholderia phytofirmans (strain DSM 17436 / LMG 22146 / PsJN)</name>
    <name type="common">Burkholderia phytofirmans</name>
    <dbReference type="NCBI Taxonomy" id="398527"/>
    <lineage>
        <taxon>Bacteria</taxon>
        <taxon>Pseudomonadati</taxon>
        <taxon>Pseudomonadota</taxon>
        <taxon>Betaproteobacteria</taxon>
        <taxon>Burkholderiales</taxon>
        <taxon>Burkholderiaceae</taxon>
        <taxon>Paraburkholderia</taxon>
    </lineage>
</organism>
<feature type="chain" id="PRO_1000099977" description="Uroporphyrinogen decarboxylase">
    <location>
        <begin position="1"/>
        <end position="366"/>
    </location>
</feature>
<feature type="binding site" evidence="1">
    <location>
        <begin position="28"/>
        <end position="32"/>
    </location>
    <ligand>
        <name>substrate</name>
    </ligand>
</feature>
<feature type="binding site" evidence="1">
    <location>
        <position position="78"/>
    </location>
    <ligand>
        <name>substrate</name>
    </ligand>
</feature>
<feature type="binding site" evidence="1">
    <location>
        <position position="160"/>
    </location>
    <ligand>
        <name>substrate</name>
    </ligand>
</feature>
<feature type="binding site" evidence="1">
    <location>
        <position position="215"/>
    </location>
    <ligand>
        <name>substrate</name>
    </ligand>
</feature>
<feature type="binding site" evidence="1">
    <location>
        <position position="333"/>
    </location>
    <ligand>
        <name>substrate</name>
    </ligand>
</feature>
<feature type="site" description="Transition state stabilizer" evidence="1">
    <location>
        <position position="78"/>
    </location>
</feature>
<evidence type="ECO:0000255" key="1">
    <source>
        <dbReference type="HAMAP-Rule" id="MF_00218"/>
    </source>
</evidence>
<proteinExistence type="inferred from homology"/>
<comment type="function">
    <text evidence="1">Catalyzes the decarboxylation of four acetate groups of uroporphyrinogen-III to yield coproporphyrinogen-III.</text>
</comment>
<comment type="catalytic activity">
    <reaction evidence="1">
        <text>uroporphyrinogen III + 4 H(+) = coproporphyrinogen III + 4 CO2</text>
        <dbReference type="Rhea" id="RHEA:19865"/>
        <dbReference type="ChEBI" id="CHEBI:15378"/>
        <dbReference type="ChEBI" id="CHEBI:16526"/>
        <dbReference type="ChEBI" id="CHEBI:57308"/>
        <dbReference type="ChEBI" id="CHEBI:57309"/>
        <dbReference type="EC" id="4.1.1.37"/>
    </reaction>
</comment>
<comment type="pathway">
    <text evidence="1">Porphyrin-containing compound metabolism; protoporphyrin-IX biosynthesis; coproporphyrinogen-III from 5-aminolevulinate: step 4/4.</text>
</comment>
<comment type="subunit">
    <text evidence="1">Homodimer.</text>
</comment>
<comment type="subcellular location">
    <subcellularLocation>
        <location evidence="1">Cytoplasm</location>
    </subcellularLocation>
</comment>
<comment type="similarity">
    <text evidence="1">Belongs to the uroporphyrinogen decarboxylase family.</text>
</comment>
<name>DCUP_PARPJ</name>
<dbReference type="EC" id="4.1.1.37" evidence="1"/>
<dbReference type="EMBL" id="CP001052">
    <property type="protein sequence ID" value="ACD18277.1"/>
    <property type="molecule type" value="Genomic_DNA"/>
</dbReference>
<dbReference type="RefSeq" id="WP_012434797.1">
    <property type="nucleotide sequence ID" value="NC_010681.1"/>
</dbReference>
<dbReference type="SMR" id="B2T7J6"/>
<dbReference type="STRING" id="398527.Bphyt_3890"/>
<dbReference type="KEGG" id="bpy:Bphyt_3890"/>
<dbReference type="eggNOG" id="COG0407">
    <property type="taxonomic scope" value="Bacteria"/>
</dbReference>
<dbReference type="HOGENOM" id="CLU_040933_0_0_4"/>
<dbReference type="OrthoDB" id="9806656at2"/>
<dbReference type="UniPathway" id="UPA00251">
    <property type="reaction ID" value="UER00321"/>
</dbReference>
<dbReference type="Proteomes" id="UP000001739">
    <property type="component" value="Chromosome 1"/>
</dbReference>
<dbReference type="GO" id="GO:0005829">
    <property type="term" value="C:cytosol"/>
    <property type="evidence" value="ECO:0007669"/>
    <property type="project" value="TreeGrafter"/>
</dbReference>
<dbReference type="GO" id="GO:0004853">
    <property type="term" value="F:uroporphyrinogen decarboxylase activity"/>
    <property type="evidence" value="ECO:0007669"/>
    <property type="project" value="UniProtKB-UniRule"/>
</dbReference>
<dbReference type="GO" id="GO:0019353">
    <property type="term" value="P:protoporphyrinogen IX biosynthetic process from glutamate"/>
    <property type="evidence" value="ECO:0007669"/>
    <property type="project" value="TreeGrafter"/>
</dbReference>
<dbReference type="CDD" id="cd00717">
    <property type="entry name" value="URO-D"/>
    <property type="match status" value="1"/>
</dbReference>
<dbReference type="FunFam" id="3.20.20.210:FF:000001">
    <property type="entry name" value="Uroporphyrinogen decarboxylase"/>
    <property type="match status" value="1"/>
</dbReference>
<dbReference type="Gene3D" id="3.20.20.210">
    <property type="match status" value="1"/>
</dbReference>
<dbReference type="HAMAP" id="MF_00218">
    <property type="entry name" value="URO_D"/>
    <property type="match status" value="1"/>
</dbReference>
<dbReference type="InterPro" id="IPR038071">
    <property type="entry name" value="UROD/MetE-like_sf"/>
</dbReference>
<dbReference type="InterPro" id="IPR006361">
    <property type="entry name" value="Uroporphyrinogen_deCO2ase_HemE"/>
</dbReference>
<dbReference type="InterPro" id="IPR000257">
    <property type="entry name" value="Uroporphyrinogen_deCOase"/>
</dbReference>
<dbReference type="NCBIfam" id="TIGR01464">
    <property type="entry name" value="hemE"/>
    <property type="match status" value="1"/>
</dbReference>
<dbReference type="PANTHER" id="PTHR21091">
    <property type="entry name" value="METHYLTETRAHYDROFOLATE:HOMOCYSTEINE METHYLTRANSFERASE RELATED"/>
    <property type="match status" value="1"/>
</dbReference>
<dbReference type="PANTHER" id="PTHR21091:SF169">
    <property type="entry name" value="UROPORPHYRINOGEN DECARBOXYLASE"/>
    <property type="match status" value="1"/>
</dbReference>
<dbReference type="Pfam" id="PF01208">
    <property type="entry name" value="URO-D"/>
    <property type="match status" value="1"/>
</dbReference>
<dbReference type="SUPFAM" id="SSF51726">
    <property type="entry name" value="UROD/MetE-like"/>
    <property type="match status" value="1"/>
</dbReference>
<dbReference type="PROSITE" id="PS00906">
    <property type="entry name" value="UROD_1"/>
    <property type="match status" value="1"/>
</dbReference>
<dbReference type="PROSITE" id="PS00907">
    <property type="entry name" value="UROD_2"/>
    <property type="match status" value="1"/>
</dbReference>
<protein>
    <recommendedName>
        <fullName evidence="1">Uroporphyrinogen decarboxylase</fullName>
        <shortName evidence="1">UPD</shortName>
        <shortName evidence="1">URO-D</shortName>
        <ecNumber evidence="1">4.1.1.37</ecNumber>
    </recommendedName>
</protein>
<reference key="1">
    <citation type="journal article" date="2011" name="J. Bacteriol.">
        <title>Complete genome sequence of the plant growth-promoting endophyte Burkholderia phytofirmans strain PsJN.</title>
        <authorList>
            <person name="Weilharter A."/>
            <person name="Mitter B."/>
            <person name="Shin M.V."/>
            <person name="Chain P.S."/>
            <person name="Nowak J."/>
            <person name="Sessitsch A."/>
        </authorList>
    </citation>
    <scope>NUCLEOTIDE SEQUENCE [LARGE SCALE GENOMIC DNA]</scope>
    <source>
        <strain>DSM 17436 / LMG 22146 / PsJN</strain>
    </source>
</reference>
<keyword id="KW-0963">Cytoplasm</keyword>
<keyword id="KW-0210">Decarboxylase</keyword>
<keyword id="KW-0456">Lyase</keyword>
<keyword id="KW-0627">Porphyrin biosynthesis</keyword>